<name>SH2B2_RAT</name>
<comment type="function">
    <text evidence="1 6 7 9 11">Adapter protein for several members of the tyrosine kinase receptor family. Involved in multiple signaling pathways. Binds to EPOR and suppresses EPO-induced STAT5 activation, possibly through a masking effect on STAT5 docking sites in EPOR. Suppresses PDGF-induced mitogenesis (By similarity). Involved in stimulation of glucose uptake by insulin. Involved in coupling from immunoreceptor to Ras signaling. Acts as a negative regulator of cytokine signaling in collaboration with CBL. Induces cytoskeletal reorganization and neurite outgrowth in cultured neurons.</text>
</comment>
<comment type="subunit">
    <text evidence="1 6 7 8 9 10 11">Homodimer. Interacts with KIT/c-KIT, SHC1, EPOR, PDGFR, VAV1 and VAV3. Interacts (via N-terminal region) with SHC1. Interacts (via the phosphorylated C-terminus) with GRB2. Interacts (via its SH2 domain) with EPOR, INSR and KIT. Interacts with GRB2 after B-cell antigen receptor stimulation. Interacts (via PH domain) with VAV3 (By similarity). Interacts with NTRK1, NTRK2 and NTRK3 (phosphorylated); after stimulation of the receptor by its extracellular ligand and subsequent autophosphorylation of the receptor. Binds INSR, GRB2, ASB6 and CAP. Insulin stimulation leads to dissociation of CAP. Binds CBS only when SH2B2/APS has become phosphorylated. INSR binding does not depend on the phosphorylation of SH2B2/APS.</text>
</comment>
<comment type="interaction">
    <interactant intactId="EBI-8562298">
        <id>Q9Z200</id>
    </interactant>
    <interactant intactId="EBI-8562298">
        <id>Q9Z200</id>
        <label>Sh2b2</label>
    </interactant>
    <organismsDiffer>false</organismsDiffer>
    <experiments>2</experiments>
</comment>
<comment type="subcellular location">
    <subcellularLocation>
        <location>Cytoplasm</location>
    </subcellularLocation>
    <subcellularLocation>
        <location>Membrane</location>
    </subcellularLocation>
    <text>Recruited to the membrane by binding to an autophosphorylated receptor after receptor stimulation by its extracellular ligand.</text>
</comment>
<comment type="tissue specificity">
    <text evidence="11">Detected in embryonic brain, spinal cord and cortical neurons.</text>
</comment>
<comment type="PTM">
    <text evidence="1">Phosphorylated on a tyrosine residue by NTRK1, NTRK2, NTRK3 and INSR after stimulation of the receptor by its extracellular ligand. Tyrosine phosphorylated by JAK2, KIT and other kinases activated by B-cell receptor in response to stimulation with cytokines, IL3, IL5, PDGF, IGF1, IGF2, CSF2/GM-CSF and cross-linking of the B-cell receptor complex (By similarity).</text>
</comment>
<comment type="similarity">
    <text evidence="12">Belongs to the SH2B adapter family.</text>
</comment>
<feature type="chain" id="PRO_0000064649" description="SH2B adapter protein 2">
    <location>
        <begin position="1"/>
        <end position="621"/>
    </location>
</feature>
<feature type="domain" description="PH" evidence="3">
    <location>
        <begin position="186"/>
        <end position="299"/>
    </location>
</feature>
<feature type="domain" description="SH2" evidence="4">
    <location>
        <begin position="409"/>
        <end position="507"/>
    </location>
</feature>
<feature type="region of interest" description="Disordered" evidence="5">
    <location>
        <begin position="144"/>
        <end position="165"/>
    </location>
</feature>
<feature type="region of interest" description="Disordered" evidence="5">
    <location>
        <begin position="507"/>
        <end position="528"/>
    </location>
</feature>
<feature type="region of interest" description="Disordered" evidence="5">
    <location>
        <begin position="548"/>
        <end position="609"/>
    </location>
</feature>
<feature type="compositionally biased region" description="Low complexity" evidence="5">
    <location>
        <begin position="552"/>
        <end position="570"/>
    </location>
</feature>
<feature type="modified residue" description="Phosphotyrosine" evidence="2">
    <location>
        <position position="47"/>
    </location>
</feature>
<feature type="modified residue" description="Phosphoserine" evidence="2">
    <location>
        <position position="130"/>
    </location>
</feature>
<feature type="modified residue" description="Phosphoserine" evidence="2">
    <location>
        <position position="303"/>
    </location>
</feature>
<feature type="modified residue" description="Phosphoserine" evidence="2">
    <location>
        <position position="597"/>
    </location>
</feature>
<feature type="modified residue" description="Phosphotyrosine" evidence="7">
    <location>
        <position position="618"/>
    </location>
</feature>
<feature type="mutagenesis site" description="Abolishes interaction with phosphorylated INSR." evidence="8">
    <original>R</original>
    <variation>A</variation>
    <location>
        <position position="437"/>
    </location>
</feature>
<feature type="mutagenesis site" description="Reduces interaction with phosphorylated INSR." evidence="8">
    <original>K</original>
    <variation>A</variation>
    <location>
        <position position="455"/>
    </location>
</feature>
<feature type="mutagenesis site" description="Abolishes interaction with phosphorylated INSR." evidence="8">
    <original>K</original>
    <variation>N</variation>
    <location>
        <position position="457"/>
    </location>
</feature>
<feature type="mutagenesis site" description="Abolishes phosphorylation in response to insulin.">
    <original>Y</original>
    <variation>F</variation>
    <location>
        <position position="618"/>
    </location>
</feature>
<feature type="helix" evidence="13">
    <location>
        <begin position="404"/>
        <end position="406"/>
    </location>
</feature>
<feature type="helix" evidence="13">
    <location>
        <begin position="416"/>
        <end position="424"/>
    </location>
</feature>
<feature type="helix" evidence="13">
    <location>
        <begin position="427"/>
        <end position="430"/>
    </location>
</feature>
<feature type="strand" evidence="13">
    <location>
        <begin position="434"/>
        <end position="438"/>
    </location>
</feature>
<feature type="strand" evidence="13">
    <location>
        <begin position="440"/>
        <end position="442"/>
    </location>
</feature>
<feature type="strand" evidence="13">
    <location>
        <begin position="446"/>
        <end position="452"/>
    </location>
</feature>
<feature type="strand" evidence="13">
    <location>
        <begin position="455"/>
        <end position="460"/>
    </location>
</feature>
<feature type="helix" evidence="13">
    <location>
        <begin position="469"/>
        <end position="486"/>
    </location>
</feature>
<protein>
    <recommendedName>
        <fullName>SH2B adapter protein 2</fullName>
    </recommendedName>
    <alternativeName>
        <fullName>Adapter protein with pleckstrin homology and Src homology 2 domains</fullName>
    </alternativeName>
    <alternativeName>
        <fullName>SH2 and PH domain-containing adapter protein APS</fullName>
    </alternativeName>
</protein>
<evidence type="ECO:0000250" key="1"/>
<evidence type="ECO:0000250" key="2">
    <source>
        <dbReference type="UniProtKB" id="Q9JID9"/>
    </source>
</evidence>
<evidence type="ECO:0000255" key="3">
    <source>
        <dbReference type="PROSITE-ProRule" id="PRU00145"/>
    </source>
</evidence>
<evidence type="ECO:0000255" key="4">
    <source>
        <dbReference type="PROSITE-ProRule" id="PRU00191"/>
    </source>
</evidence>
<evidence type="ECO:0000256" key="5">
    <source>
        <dbReference type="SAM" id="MobiDB-lite"/>
    </source>
</evidence>
<evidence type="ECO:0000269" key="6">
    <source>
    </source>
</evidence>
<evidence type="ECO:0000269" key="7">
    <source>
    </source>
</evidence>
<evidence type="ECO:0000269" key="8">
    <source>
    </source>
</evidence>
<evidence type="ECO:0000269" key="9">
    <source>
    </source>
</evidence>
<evidence type="ECO:0000269" key="10">
    <source>
    </source>
</evidence>
<evidence type="ECO:0000269" key="11">
    <source>
    </source>
</evidence>
<evidence type="ECO:0000305" key="12"/>
<evidence type="ECO:0007829" key="13">
    <source>
        <dbReference type="PDB" id="1RPY"/>
    </source>
</evidence>
<proteinExistence type="evidence at protein level"/>
<dbReference type="EMBL" id="AF095576">
    <property type="protein sequence ID" value="AAC64408.1"/>
    <property type="molecule type" value="mRNA"/>
</dbReference>
<dbReference type="RefSeq" id="NP_446121.1">
    <property type="nucleotide sequence ID" value="NM_053669.2"/>
</dbReference>
<dbReference type="RefSeq" id="XP_008767335.1">
    <property type="nucleotide sequence ID" value="XM_008769113.4"/>
</dbReference>
<dbReference type="RefSeq" id="XP_017453727.1">
    <property type="nucleotide sequence ID" value="XM_017598238.3"/>
</dbReference>
<dbReference type="RefSeq" id="XP_017453728.1">
    <property type="nucleotide sequence ID" value="XM_017598239.3"/>
</dbReference>
<dbReference type="PDB" id="1RPY">
    <property type="method" value="X-ray"/>
    <property type="resolution" value="2.30 A"/>
    <property type="chains" value="A/B=401-510"/>
</dbReference>
<dbReference type="PDB" id="1RQQ">
    <property type="method" value="X-ray"/>
    <property type="resolution" value="2.60 A"/>
    <property type="chains" value="C/D=401-510"/>
</dbReference>
<dbReference type="PDB" id="1YVH">
    <property type="method" value="X-ray"/>
    <property type="resolution" value="2.05 A"/>
    <property type="chains" value="B=609-621"/>
</dbReference>
<dbReference type="PDBsum" id="1RPY"/>
<dbReference type="PDBsum" id="1RQQ"/>
<dbReference type="PDBsum" id="1YVH"/>
<dbReference type="BMRB" id="Q9Z200"/>
<dbReference type="SMR" id="Q9Z200"/>
<dbReference type="BioGRID" id="250306">
    <property type="interactions" value="1"/>
</dbReference>
<dbReference type="FunCoup" id="Q9Z200">
    <property type="interactions" value="717"/>
</dbReference>
<dbReference type="IntAct" id="Q9Z200">
    <property type="interactions" value="2"/>
</dbReference>
<dbReference type="MINT" id="Q9Z200"/>
<dbReference type="STRING" id="10116.ENSRNOP00000001935"/>
<dbReference type="iPTMnet" id="Q9Z200"/>
<dbReference type="PhosphoSitePlus" id="Q9Z200"/>
<dbReference type="PaxDb" id="10116-ENSRNOP00000001935"/>
<dbReference type="Ensembl" id="ENSRNOT00000001935.6">
    <property type="protein sequence ID" value="ENSRNOP00000001935.5"/>
    <property type="gene ID" value="ENSRNOG00000001425.6"/>
</dbReference>
<dbReference type="GeneID" id="114203"/>
<dbReference type="KEGG" id="rno:114203"/>
<dbReference type="UCSC" id="RGD:69284">
    <property type="organism name" value="rat"/>
</dbReference>
<dbReference type="AGR" id="RGD:69284"/>
<dbReference type="CTD" id="10603"/>
<dbReference type="RGD" id="69284">
    <property type="gene designation" value="Sh2b2"/>
</dbReference>
<dbReference type="eggNOG" id="ENOG502QT43">
    <property type="taxonomic scope" value="Eukaryota"/>
</dbReference>
<dbReference type="GeneTree" id="ENSGT00950000183191"/>
<dbReference type="HOGENOM" id="CLU_014885_5_0_1"/>
<dbReference type="InParanoid" id="Q9Z200"/>
<dbReference type="OMA" id="TQKWEKS"/>
<dbReference type="OrthoDB" id="10047184at2759"/>
<dbReference type="PhylomeDB" id="Q9Z200"/>
<dbReference type="Reactome" id="R-RNO-1433559">
    <property type="pathway name" value="Regulation of KIT signaling"/>
</dbReference>
<dbReference type="Reactome" id="R-RNO-983231">
    <property type="pathway name" value="Factors involved in megakaryocyte development and platelet production"/>
</dbReference>
<dbReference type="EvolutionaryTrace" id="Q9Z200"/>
<dbReference type="PRO" id="PR:Q9Z200"/>
<dbReference type="Proteomes" id="UP000002494">
    <property type="component" value="Chromosome 12"/>
</dbReference>
<dbReference type="Bgee" id="ENSRNOG00000001425">
    <property type="expression patterns" value="Expressed in spleen and 18 other cell types or tissues"/>
</dbReference>
<dbReference type="GO" id="GO:0005884">
    <property type="term" value="C:actin filament"/>
    <property type="evidence" value="ECO:0000266"/>
    <property type="project" value="RGD"/>
</dbReference>
<dbReference type="GO" id="GO:0005737">
    <property type="term" value="C:cytoplasm"/>
    <property type="evidence" value="ECO:0000266"/>
    <property type="project" value="RGD"/>
</dbReference>
<dbReference type="GO" id="GO:0005886">
    <property type="term" value="C:plasma membrane"/>
    <property type="evidence" value="ECO:0000266"/>
    <property type="project" value="RGD"/>
</dbReference>
<dbReference type="GO" id="GO:0001726">
    <property type="term" value="C:ruffle"/>
    <property type="evidence" value="ECO:0000266"/>
    <property type="project" value="RGD"/>
</dbReference>
<dbReference type="GO" id="GO:0001725">
    <property type="term" value="C:stress fiber"/>
    <property type="evidence" value="ECO:0000266"/>
    <property type="project" value="RGD"/>
</dbReference>
<dbReference type="GO" id="GO:0042802">
    <property type="term" value="F:identical protein binding"/>
    <property type="evidence" value="ECO:0000353"/>
    <property type="project" value="IntAct"/>
</dbReference>
<dbReference type="GO" id="GO:0042169">
    <property type="term" value="F:SH2 domain binding"/>
    <property type="evidence" value="ECO:0000266"/>
    <property type="project" value="RGD"/>
</dbReference>
<dbReference type="GO" id="GO:0035591">
    <property type="term" value="F:signaling adaptor activity"/>
    <property type="evidence" value="ECO:0000266"/>
    <property type="project" value="RGD"/>
</dbReference>
<dbReference type="GO" id="GO:0005068">
    <property type="term" value="F:transmembrane receptor protein tyrosine kinase adaptor activity"/>
    <property type="evidence" value="ECO:0000266"/>
    <property type="project" value="RGD"/>
</dbReference>
<dbReference type="GO" id="GO:0030036">
    <property type="term" value="P:actin cytoskeleton organization"/>
    <property type="evidence" value="ECO:0000266"/>
    <property type="project" value="RGD"/>
</dbReference>
<dbReference type="GO" id="GO:0050851">
    <property type="term" value="P:antigen receptor-mediated signaling pathway"/>
    <property type="evidence" value="ECO:0000318"/>
    <property type="project" value="GO_Central"/>
</dbReference>
<dbReference type="GO" id="GO:0050853">
    <property type="term" value="P:B cell receptor signaling pathway"/>
    <property type="evidence" value="ECO:0000266"/>
    <property type="project" value="RGD"/>
</dbReference>
<dbReference type="GO" id="GO:0001922">
    <property type="term" value="P:B-1 B cell homeostasis"/>
    <property type="evidence" value="ECO:0000266"/>
    <property type="project" value="RGD"/>
</dbReference>
<dbReference type="GO" id="GO:0050873">
    <property type="term" value="P:brown fat cell differentiation"/>
    <property type="evidence" value="ECO:0000266"/>
    <property type="project" value="RGD"/>
</dbReference>
<dbReference type="GO" id="GO:0019221">
    <property type="term" value="P:cytokine-mediated signaling pathway"/>
    <property type="evidence" value="ECO:0000266"/>
    <property type="project" value="RGD"/>
</dbReference>
<dbReference type="GO" id="GO:0008286">
    <property type="term" value="P:insulin receptor signaling pathway"/>
    <property type="evidence" value="ECO:0000266"/>
    <property type="project" value="RGD"/>
</dbReference>
<dbReference type="GO" id="GO:0035556">
    <property type="term" value="P:intracellular signal transduction"/>
    <property type="evidence" value="ECO:0000266"/>
    <property type="project" value="RGD"/>
</dbReference>
<dbReference type="GO" id="GO:0007399">
    <property type="term" value="P:nervous system development"/>
    <property type="evidence" value="ECO:0000315"/>
    <property type="project" value="RGD"/>
</dbReference>
<dbReference type="GO" id="GO:0050776">
    <property type="term" value="P:regulation of immune response"/>
    <property type="evidence" value="ECO:0000266"/>
    <property type="project" value="RGD"/>
</dbReference>
<dbReference type="GO" id="GO:0019222">
    <property type="term" value="P:regulation of metabolic process"/>
    <property type="evidence" value="ECO:0000266"/>
    <property type="project" value="RGD"/>
</dbReference>
<dbReference type="GO" id="GO:0046578">
    <property type="term" value="P:regulation of Ras protein signal transduction"/>
    <property type="evidence" value="ECO:0000314"/>
    <property type="project" value="RGD"/>
</dbReference>
<dbReference type="CDD" id="cd01231">
    <property type="entry name" value="PH_SH2B_family"/>
    <property type="match status" value="1"/>
</dbReference>
<dbReference type="CDD" id="cd10411">
    <property type="entry name" value="SH2_SH2B2"/>
    <property type="match status" value="1"/>
</dbReference>
<dbReference type="FunFam" id="3.30.505.10:FF:000008">
    <property type="entry name" value="SH2B adapter protein 1 isoform 2"/>
    <property type="match status" value="1"/>
</dbReference>
<dbReference type="FunFam" id="2.30.29.30:FF:000187">
    <property type="entry name" value="SH2B adapter protein 2"/>
    <property type="match status" value="1"/>
</dbReference>
<dbReference type="Gene3D" id="6.10.140.110">
    <property type="match status" value="1"/>
</dbReference>
<dbReference type="Gene3D" id="2.30.29.30">
    <property type="entry name" value="Pleckstrin-homology domain (PH domain)/Phosphotyrosine-binding domain (PTB)"/>
    <property type="match status" value="1"/>
</dbReference>
<dbReference type="Gene3D" id="3.30.505.10">
    <property type="entry name" value="SH2 domain"/>
    <property type="match status" value="1"/>
</dbReference>
<dbReference type="IDEAL" id="IID50237"/>
<dbReference type="InterPro" id="IPR011993">
    <property type="entry name" value="PH-like_dom_sf"/>
</dbReference>
<dbReference type="InterPro" id="IPR001849">
    <property type="entry name" value="PH_domain"/>
</dbReference>
<dbReference type="InterPro" id="IPR015012">
    <property type="entry name" value="Phe_ZIP"/>
</dbReference>
<dbReference type="InterPro" id="IPR036290">
    <property type="entry name" value="Phe_ZIP_sf"/>
</dbReference>
<dbReference type="InterPro" id="IPR000980">
    <property type="entry name" value="SH2"/>
</dbReference>
<dbReference type="InterPro" id="IPR036860">
    <property type="entry name" value="SH2_dom_sf"/>
</dbReference>
<dbReference type="InterPro" id="IPR030523">
    <property type="entry name" value="SH2B"/>
</dbReference>
<dbReference type="InterPro" id="IPR035058">
    <property type="entry name" value="SH2B2_SH2"/>
</dbReference>
<dbReference type="PANTHER" id="PTHR10872">
    <property type="entry name" value="SH2B ADAPTER PROTEIN"/>
    <property type="match status" value="1"/>
</dbReference>
<dbReference type="PANTHER" id="PTHR10872:SF4">
    <property type="entry name" value="SH2B ADAPTER PROTEIN 2"/>
    <property type="match status" value="1"/>
</dbReference>
<dbReference type="Pfam" id="PF00169">
    <property type="entry name" value="PH"/>
    <property type="match status" value="1"/>
</dbReference>
<dbReference type="Pfam" id="PF08916">
    <property type="entry name" value="Phe_ZIP"/>
    <property type="match status" value="1"/>
</dbReference>
<dbReference type="Pfam" id="PF00017">
    <property type="entry name" value="SH2"/>
    <property type="match status" value="1"/>
</dbReference>
<dbReference type="SMART" id="SM00233">
    <property type="entry name" value="PH"/>
    <property type="match status" value="1"/>
</dbReference>
<dbReference type="SMART" id="SM00252">
    <property type="entry name" value="SH2"/>
    <property type="match status" value="1"/>
</dbReference>
<dbReference type="SUPFAM" id="SSF50729">
    <property type="entry name" value="PH domain-like"/>
    <property type="match status" value="1"/>
</dbReference>
<dbReference type="SUPFAM" id="SSF109805">
    <property type="entry name" value="Phenylalanine zipper"/>
    <property type="match status" value="1"/>
</dbReference>
<dbReference type="SUPFAM" id="SSF55550">
    <property type="entry name" value="SH2 domain"/>
    <property type="match status" value="1"/>
</dbReference>
<dbReference type="PROSITE" id="PS50003">
    <property type="entry name" value="PH_DOMAIN"/>
    <property type="match status" value="1"/>
</dbReference>
<dbReference type="PROSITE" id="PS50001">
    <property type="entry name" value="SH2"/>
    <property type="match status" value="1"/>
</dbReference>
<reference key="1">
    <citation type="journal article" date="1998" name="Neuron">
        <title>Identification and characterization of novel substrates of Trk receptors in developing neurons.</title>
        <authorList>
            <person name="Qian X."/>
            <person name="Riccio A."/>
            <person name="Zhang Y."/>
            <person name="Ginty D.D."/>
        </authorList>
    </citation>
    <scope>NUCLEOTIDE SEQUENCE [MRNA]</scope>
    <scope>FUNCTION IN NGF SIGNALING</scope>
    <scope>INTERACTION WITH GRB2; NTRK1; NTRK2 AND NTRK3</scope>
    <scope>PHOSPHORYLATION</scope>
    <scope>TISSUE SPECIFICITY</scope>
    <source>
        <tissue>Fetal spinal cord</tissue>
        <tissue>Hippocampus</tissue>
    </source>
</reference>
<reference key="2">
    <citation type="journal article" date="2000" name="FEBS Lett.">
        <title>The APS adapter protein couples the insulin receptor to the phosphorylation of c-Cbl and facilitates ligand-stimulated ubiquitination of the insulin receptor.</title>
        <authorList>
            <person name="Ahmed Z."/>
            <person name="Smith B.J."/>
            <person name="Pillay T.S."/>
        </authorList>
    </citation>
    <scope>FUNCTION</scope>
    <scope>INTERACTION WITH INSR AND CBL</scope>
    <scope>PHOSPHORYLATION</scope>
</reference>
<reference key="3">
    <citation type="journal article" date="2002" name="Mol. Cell. Biol.">
        <title>APS facilitates c-Cbl tyrosine phosphorylation and GLUT4 translocation in response to insulin in 3T3-L1 adipocytes.</title>
        <authorList>
            <person name="Liu J."/>
            <person name="Kimura A."/>
            <person name="Baumann C.A."/>
            <person name="Saltiel A.R."/>
        </authorList>
    </citation>
    <scope>FUNCTION</scope>
    <scope>INTERACTION WITH CBL AND CAP</scope>
    <scope>PHOSPHORYLATION AT TYR-618</scope>
</reference>
<reference key="4">
    <citation type="journal article" date="2004" name="J. Biol. Chem.">
        <title>Primary and essential role of the adaptor protein APS for recruitment of both c-Cbl and its associated protein CAP in insulin signaling.</title>
        <authorList>
            <person name="Ahn M.-Y."/>
            <person name="Katsanakis K.D."/>
            <person name="Bheda F."/>
            <person name="Pillay T.S."/>
        </authorList>
    </citation>
    <scope>FUNCTION</scope>
    <scope>INTERACTION WITH INSR; CAP AND CBL</scope>
</reference>
<reference key="5">
    <citation type="journal article" date="2004" name="J. Biol. Chem.">
        <title>Asb6, an adipocyte-specific ankyrin and SOCS box protein, interacts with APS to enable recruitment of elongins B and C to the insulin receptor signaling complex.</title>
        <authorList>
            <person name="Wilcox A."/>
            <person name="Katsanakis K.D."/>
            <person name="Bheda F."/>
            <person name="Pillay T.S."/>
        </authorList>
    </citation>
    <scope>INTERACTION WITH ASB6</scope>
</reference>
<reference key="6">
    <citation type="journal article" date="2012" name="Nat. Commun.">
        <title>Quantitative maps of protein phosphorylation sites across 14 different rat organs and tissues.</title>
        <authorList>
            <person name="Lundby A."/>
            <person name="Secher A."/>
            <person name="Lage K."/>
            <person name="Nordsborg N.B."/>
            <person name="Dmytriyev A."/>
            <person name="Lundby C."/>
            <person name="Olsen J.V."/>
        </authorList>
    </citation>
    <scope>IDENTIFICATION BY MASS SPECTROMETRY [LARGE SCALE ANALYSIS]</scope>
</reference>
<reference key="7">
    <citation type="journal article" date="2003" name="Mol. Cell">
        <title>Structural basis for recruitment of the adaptor protein APS to the activated insulin receptor.</title>
        <authorList>
            <person name="Hu J."/>
            <person name="Liu J."/>
            <person name="Ghirlando R."/>
            <person name="Saltiel A.R."/>
            <person name="Hubbard S.R."/>
        </authorList>
    </citation>
    <scope>X-RAY CRYSTALLOGRAPHY (2.3 ANGSTROMS) OF 401-510 IN COMPLEX WITH PHOSPHORYLATED INSR</scope>
    <scope>MUTAGENESIS OF ARG-437; LYS-455 AND LYS-457</scope>
    <scope>HOMODIMERIZATION</scope>
</reference>
<accession>Q9Z200</accession>
<organism>
    <name type="scientific">Rattus norvegicus</name>
    <name type="common">Rat</name>
    <dbReference type="NCBI Taxonomy" id="10116"/>
    <lineage>
        <taxon>Eukaryota</taxon>
        <taxon>Metazoa</taxon>
        <taxon>Chordata</taxon>
        <taxon>Craniata</taxon>
        <taxon>Vertebrata</taxon>
        <taxon>Euteleostomi</taxon>
        <taxon>Mammalia</taxon>
        <taxon>Eutheria</taxon>
        <taxon>Euarchontoglires</taxon>
        <taxon>Glires</taxon>
        <taxon>Rodentia</taxon>
        <taxon>Myomorpha</taxon>
        <taxon>Muroidea</taxon>
        <taxon>Muridae</taxon>
        <taxon>Murinae</taxon>
        <taxon>Rattus</taxon>
    </lineage>
</organism>
<sequence>MNGATPGSAAAPAPVPDWRQFCELHAQVAAVDFAHKFCRFLRDNPTYDTPDAGTSFSRHFAANFLAVFSEEVRRVLGTAADTMEPEPAVTSVTSALKTATYGHSRSSEDVSAHVATKARVRKGFSLRNMSLCVVDGVRDLWHRRASPEPEGGATPKTTEPVSEPRDKWTRRLRLARTLAAKVELVDIQREGALRFMVADDAASGPGGTAQWQKCRLLLRRAVAGERFRLEFFVPPKASRPKVSIPLSAIIEVRTTMPLEMPEKDNTFVLKVENGAEYILETIDSLQKHSWVADIQGCVDPGDSEEDTGLSCARGGCLASRVTSCSCELLTEADMPRPPETMTAVGAVVTAPHGRARDTVGESLAHVPLETFLQTLESSGGVSESNNTGDEGAELDPDAEAELELSDYPWFHGTLSRVKAAQLVLAGGPRSHGLFVIRQSETRPGECVLTFNFQGKAKHLRLSLNGHGQCHVQHLWFQSVFDMLRHFHTHPIPLESGGSADITLRSYVRAQGPPPDPGPAPNTAAPVPACWTEPAGQHYFSSLATATCPPTSPSNGAGASSSSGSSSSATSVPPRPAEGPLSARSRSNSTEHLLEAASGATEEPADATLGRARAVENQYSFY</sequence>
<keyword id="KW-0002">3D-structure</keyword>
<keyword id="KW-0963">Cytoplasm</keyword>
<keyword id="KW-0472">Membrane</keyword>
<keyword id="KW-0597">Phosphoprotein</keyword>
<keyword id="KW-1185">Reference proteome</keyword>
<keyword id="KW-0727">SH2 domain</keyword>
<gene>
    <name type="primary">Sh2b2</name>
    <name type="synonym">Aps</name>
</gene>